<evidence type="ECO:0000250" key="1"/>
<evidence type="ECO:0000250" key="2">
    <source>
        <dbReference type="UniProtKB" id="O14503"/>
    </source>
</evidence>
<evidence type="ECO:0000250" key="3">
    <source>
        <dbReference type="UniProtKB" id="O35185"/>
    </source>
</evidence>
<evidence type="ECO:0000255" key="4">
    <source>
        <dbReference type="PROSITE-ProRule" id="PRU00380"/>
    </source>
</evidence>
<evidence type="ECO:0000255" key="5">
    <source>
        <dbReference type="PROSITE-ProRule" id="PRU00981"/>
    </source>
</evidence>
<evidence type="ECO:0000256" key="6">
    <source>
        <dbReference type="SAM" id="MobiDB-lite"/>
    </source>
</evidence>
<evidence type="ECO:0000269" key="7">
    <source>
    </source>
</evidence>
<evidence type="ECO:0007744" key="8">
    <source>
    </source>
</evidence>
<accession>O35780</accession>
<keyword id="KW-0090">Biological rhythms</keyword>
<keyword id="KW-0963">Cytoplasm</keyword>
<keyword id="KW-0238">DNA-binding</keyword>
<keyword id="KW-1017">Isopeptide bond</keyword>
<keyword id="KW-0539">Nucleus</keyword>
<keyword id="KW-0597">Phosphoprotein</keyword>
<keyword id="KW-1185">Reference proteome</keyword>
<keyword id="KW-0678">Repressor</keyword>
<keyword id="KW-0804">Transcription</keyword>
<keyword id="KW-0805">Transcription regulation</keyword>
<keyword id="KW-0832">Ubl conjugation</keyword>
<organism>
    <name type="scientific">Rattus norvegicus</name>
    <name type="common">Rat</name>
    <dbReference type="NCBI Taxonomy" id="10116"/>
    <lineage>
        <taxon>Eukaryota</taxon>
        <taxon>Metazoa</taxon>
        <taxon>Chordata</taxon>
        <taxon>Craniata</taxon>
        <taxon>Vertebrata</taxon>
        <taxon>Euteleostomi</taxon>
        <taxon>Mammalia</taxon>
        <taxon>Eutheria</taxon>
        <taxon>Euarchontoglires</taxon>
        <taxon>Glires</taxon>
        <taxon>Rodentia</taxon>
        <taxon>Myomorpha</taxon>
        <taxon>Muroidea</taxon>
        <taxon>Muridae</taxon>
        <taxon>Murinae</taxon>
        <taxon>Rattus</taxon>
    </lineage>
</organism>
<comment type="function">
    <text evidence="2 3">Transcriptional repressor involved in the regulation of the circadian rhythm by negatively regulating the activity of the clock genes and clock-controlled genes. Acts as the negative limb of a novel autoregulatory feedback loop (DEC loop) which differs from the one formed by the PER and CRY transcriptional repressors (PER/CRY loop). Both these loops are interlocked as it represses the expression of PER1/2 and in turn is repressed by PER1/2 and CRY1/2. Represses the activity of the circadian transcriptional activator: CLOCK-BMAL1|BMAL2 heterodimer by competing for the binding to E-box elements (5'-CACGTG-3') found within the promoters of its target genes. Negatively regulates its own expression and the expression of DBP and BHLHE41/DEC2. Acts as a corepressor of RXR and the RXR-LXR heterodimers and represses the ligand-induced RXRA and NR1H3/LXRA transactivation activity. May be involved in the regulation of chondrocyte differentiation via the cAMP pathway (By similarity). Represses the transcription of NR0B2 and attentuates the transactivation of NR0B2 by the CLOCK-BMAL1 complex (By similarity). Drives the circadian rhythm of blood pressure through transcriptional repression of ATP1B1 in the cardiovascular system (By similarity).</text>
</comment>
<comment type="subunit">
    <text evidence="1">Homodimer. Heterodimer with BHLHE41/DEC2. Interacts with TCF3/E47. Interacts with ubiquitin-conjugating enzyme UBE2I/UBC9. Interacts with HDAC1, SUMO1, RXRA and BMAL1 (By similarity).</text>
</comment>
<comment type="subcellular location">
    <subcellularLocation>
        <location evidence="2">Cytoplasm</location>
    </subcellularLocation>
    <subcellularLocation>
        <location evidence="2">Nucleus</location>
    </subcellularLocation>
    <text evidence="2">Predominantly localized in the nucleus (By similarity).</text>
</comment>
<comment type="tissue specificity">
    <text evidence="7">Expressed in heart, spleen, lung, liver, muscle, kidney, uterus and gut. Highly expressed in the cerebral cortex, especially in the fifth layer, thalamus, superior colliculus, olfactory bulb, piriform cortex, hippocampus and hypothalamic nuclei.</text>
</comment>
<comment type="induction">
    <text evidence="7">Expressed in a circadian manner in the suprachiasmatic nucleus (SCN) of the brain.</text>
</comment>
<comment type="PTM">
    <text evidence="1">Ubiquitinated; which may lead to proteasomal degradation.</text>
</comment>
<comment type="PTM">
    <text evidence="1">Sumoylation inhibits its ubiquitination and promotes its negative regulation of the CLOCK-BMAL1 heterodimer transcriptional activator activity.</text>
</comment>
<sequence>MERIPSAQPPPTCLPKTPGLEHGDLSGMDFAHMYQVYKSRRGIKRSEDSKETYKLPHRLIEKKRRDRINECIAQLKDLLPEHLKLTTLGHLEKAVVLELTLKHVKALTNLIDQQQQKIMALQSGLQAGDLSGKNIEAGQEMFCSGFQTCAREVLQYLAKHENTRDLKSSQLVTHLHRVVSELLQGSASRKPLDSAPKPVDFKEKPSFLAKGSEGPGKNCVPVIQRTFAPSGGEQSGSDTDTDSGYGGELEKGDLRSEQPYFKSDHGRRFTVGERVSTIKQESEEPPTKKSRMQLSDEEGHFVGSDLMGSPFLGPHPHQPPFCLPFYLIPPSATAYLPMLEKCWYPTSVPLLYPGLNTSAAALSSFMNPDKIPTPLLLPQRLPSPLAHSSLDSSALLQALKQIPPLNLETKD</sequence>
<protein>
    <recommendedName>
        <fullName>Class E basic helix-loop-helix protein 40</fullName>
        <shortName>bHLHe40</shortName>
    </recommendedName>
    <alternativeName>
        <fullName>Class B basic helix-loop-helix protein 2</fullName>
        <shortName>bHLHb2</shortName>
    </alternativeName>
    <alternativeName>
        <fullName>Enhancer-of-split and hairy-related protein 2</fullName>
        <shortName>SHARP-2</shortName>
    </alternativeName>
</protein>
<name>BHE40_RAT</name>
<dbReference type="EMBL" id="AF009330">
    <property type="protein sequence ID" value="AAB63587.1"/>
    <property type="molecule type" value="mRNA"/>
</dbReference>
<dbReference type="RefSeq" id="NP_445780.1">
    <property type="nucleotide sequence ID" value="NM_053328.1"/>
</dbReference>
<dbReference type="SMR" id="O35780"/>
<dbReference type="BioGRID" id="249463">
    <property type="interactions" value="11"/>
</dbReference>
<dbReference type="FunCoup" id="O35780">
    <property type="interactions" value="655"/>
</dbReference>
<dbReference type="STRING" id="10116.ENSRNOP00000009564"/>
<dbReference type="iPTMnet" id="O35780"/>
<dbReference type="PhosphoSitePlus" id="O35780"/>
<dbReference type="PaxDb" id="10116-ENSRNOP00000009564"/>
<dbReference type="GeneID" id="79431"/>
<dbReference type="KEGG" id="rno:79431"/>
<dbReference type="UCSC" id="RGD:68439">
    <property type="organism name" value="rat"/>
</dbReference>
<dbReference type="AGR" id="RGD:68439"/>
<dbReference type="CTD" id="8553"/>
<dbReference type="RGD" id="68439">
    <property type="gene designation" value="Bhlhe40"/>
</dbReference>
<dbReference type="eggNOG" id="KOG4304">
    <property type="taxonomic scope" value="Eukaryota"/>
</dbReference>
<dbReference type="InParanoid" id="O35780"/>
<dbReference type="OrthoDB" id="690068at2759"/>
<dbReference type="PhylomeDB" id="O35780"/>
<dbReference type="PRO" id="PR:O35780"/>
<dbReference type="Proteomes" id="UP000002494">
    <property type="component" value="Unplaced"/>
</dbReference>
<dbReference type="GO" id="GO:0005737">
    <property type="term" value="C:cytoplasm"/>
    <property type="evidence" value="ECO:0007669"/>
    <property type="project" value="UniProtKB-SubCell"/>
</dbReference>
<dbReference type="GO" id="GO:0005634">
    <property type="term" value="C:nucleus"/>
    <property type="evidence" value="ECO:0000266"/>
    <property type="project" value="RGD"/>
</dbReference>
<dbReference type="GO" id="GO:0043425">
    <property type="term" value="F:bHLH transcription factor binding"/>
    <property type="evidence" value="ECO:0000266"/>
    <property type="project" value="RGD"/>
</dbReference>
<dbReference type="GO" id="GO:0003677">
    <property type="term" value="F:DNA binding"/>
    <property type="evidence" value="ECO:0000266"/>
    <property type="project" value="RGD"/>
</dbReference>
<dbReference type="GO" id="GO:0000981">
    <property type="term" value="F:DNA-binding transcription factor activity, RNA polymerase II-specific"/>
    <property type="evidence" value="ECO:0000266"/>
    <property type="project" value="RGD"/>
</dbReference>
<dbReference type="GO" id="GO:0001227">
    <property type="term" value="F:DNA-binding transcription repressor activity, RNA polymerase II-specific"/>
    <property type="evidence" value="ECO:0000250"/>
    <property type="project" value="UniProtKB"/>
</dbReference>
<dbReference type="GO" id="GO:0070888">
    <property type="term" value="F:E-box binding"/>
    <property type="evidence" value="ECO:0000250"/>
    <property type="project" value="UniProtKB"/>
</dbReference>
<dbReference type="GO" id="GO:0043426">
    <property type="term" value="F:MRF binding"/>
    <property type="evidence" value="ECO:0000266"/>
    <property type="project" value="RGD"/>
</dbReference>
<dbReference type="GO" id="GO:0019904">
    <property type="term" value="F:protein domain specific binding"/>
    <property type="evidence" value="ECO:0000266"/>
    <property type="project" value="RGD"/>
</dbReference>
<dbReference type="GO" id="GO:0046982">
    <property type="term" value="F:protein heterodimerization activity"/>
    <property type="evidence" value="ECO:0000266"/>
    <property type="project" value="RGD"/>
</dbReference>
<dbReference type="GO" id="GO:0042803">
    <property type="term" value="F:protein homodimerization activity"/>
    <property type="evidence" value="ECO:0000266"/>
    <property type="project" value="RGD"/>
</dbReference>
<dbReference type="GO" id="GO:0000978">
    <property type="term" value="F:RNA polymerase II cis-regulatory region sequence-specific DNA binding"/>
    <property type="evidence" value="ECO:0000266"/>
    <property type="project" value="RGD"/>
</dbReference>
<dbReference type="GO" id="GO:0061629">
    <property type="term" value="F:RNA polymerase II-specific DNA-binding transcription factor binding"/>
    <property type="evidence" value="ECO:0000266"/>
    <property type="project" value="RGD"/>
</dbReference>
<dbReference type="GO" id="GO:1990837">
    <property type="term" value="F:sequence-specific double-stranded DNA binding"/>
    <property type="evidence" value="ECO:0000266"/>
    <property type="project" value="RGD"/>
</dbReference>
<dbReference type="GO" id="GO:0032922">
    <property type="term" value="P:circadian regulation of gene expression"/>
    <property type="evidence" value="ECO:0000250"/>
    <property type="project" value="UniProtKB"/>
</dbReference>
<dbReference type="GO" id="GO:0007623">
    <property type="term" value="P:circadian rhythm"/>
    <property type="evidence" value="ECO:0000270"/>
    <property type="project" value="UniProtKB"/>
</dbReference>
<dbReference type="GO" id="GO:0043153">
    <property type="term" value="P:entrainment of circadian clock by photoperiod"/>
    <property type="evidence" value="ECO:0000266"/>
    <property type="project" value="RGD"/>
</dbReference>
<dbReference type="GO" id="GO:0045892">
    <property type="term" value="P:negative regulation of DNA-templated transcription"/>
    <property type="evidence" value="ECO:0000250"/>
    <property type="project" value="UniProtKB"/>
</dbReference>
<dbReference type="GO" id="GO:0000122">
    <property type="term" value="P:negative regulation of transcription by RNA polymerase II"/>
    <property type="evidence" value="ECO:0000315"/>
    <property type="project" value="RGD"/>
</dbReference>
<dbReference type="GO" id="GO:0007399">
    <property type="term" value="P:nervous system development"/>
    <property type="evidence" value="ECO:0000303"/>
    <property type="project" value="RGD"/>
</dbReference>
<dbReference type="GO" id="GO:0042752">
    <property type="term" value="P:regulation of circadian rhythm"/>
    <property type="evidence" value="ECO:0000250"/>
    <property type="project" value="UniProtKB"/>
</dbReference>
<dbReference type="GO" id="GO:0050767">
    <property type="term" value="P:regulation of neurogenesis"/>
    <property type="evidence" value="ECO:0000318"/>
    <property type="project" value="GO_Central"/>
</dbReference>
<dbReference type="GO" id="GO:0048168">
    <property type="term" value="P:regulation of neuronal synaptic plasticity"/>
    <property type="evidence" value="ECO:0000270"/>
    <property type="project" value="RGD"/>
</dbReference>
<dbReference type="GO" id="GO:0009416">
    <property type="term" value="P:response to light stimulus"/>
    <property type="evidence" value="ECO:0000314"/>
    <property type="project" value="UniProtKB"/>
</dbReference>
<dbReference type="CDD" id="cd19749">
    <property type="entry name" value="bHLH-O_DEC1"/>
    <property type="match status" value="1"/>
</dbReference>
<dbReference type="FunFam" id="4.10.280.10:FF:000020">
    <property type="entry name" value="class E basic helix-loop-helix protein 40"/>
    <property type="match status" value="1"/>
</dbReference>
<dbReference type="Gene3D" id="6.10.250.980">
    <property type="match status" value="1"/>
</dbReference>
<dbReference type="Gene3D" id="4.10.280.10">
    <property type="entry name" value="Helix-loop-helix DNA-binding domain"/>
    <property type="match status" value="1"/>
</dbReference>
<dbReference type="InterPro" id="IPR011598">
    <property type="entry name" value="bHLH_dom"/>
</dbReference>
<dbReference type="InterPro" id="IPR050370">
    <property type="entry name" value="HES_HEY"/>
</dbReference>
<dbReference type="InterPro" id="IPR036638">
    <property type="entry name" value="HLH_DNA-bd_sf"/>
</dbReference>
<dbReference type="InterPro" id="IPR003650">
    <property type="entry name" value="Orange_dom"/>
</dbReference>
<dbReference type="PANTHER" id="PTHR10985">
    <property type="entry name" value="BASIC HELIX-LOOP-HELIX TRANSCRIPTION FACTOR, HES-RELATED"/>
    <property type="match status" value="1"/>
</dbReference>
<dbReference type="Pfam" id="PF07527">
    <property type="entry name" value="Hairy_orange"/>
    <property type="match status" value="1"/>
</dbReference>
<dbReference type="Pfam" id="PF00010">
    <property type="entry name" value="HLH"/>
    <property type="match status" value="1"/>
</dbReference>
<dbReference type="SMART" id="SM00353">
    <property type="entry name" value="HLH"/>
    <property type="match status" value="1"/>
</dbReference>
<dbReference type="SMART" id="SM00511">
    <property type="entry name" value="ORANGE"/>
    <property type="match status" value="1"/>
</dbReference>
<dbReference type="SUPFAM" id="SSF47459">
    <property type="entry name" value="HLH, helix-loop-helix DNA-binding domain"/>
    <property type="match status" value="1"/>
</dbReference>
<dbReference type="SUPFAM" id="SSF158457">
    <property type="entry name" value="Orange domain-like"/>
    <property type="match status" value="1"/>
</dbReference>
<dbReference type="PROSITE" id="PS50888">
    <property type="entry name" value="BHLH"/>
    <property type="match status" value="1"/>
</dbReference>
<dbReference type="PROSITE" id="PS51054">
    <property type="entry name" value="ORANGE"/>
    <property type="match status" value="1"/>
</dbReference>
<gene>
    <name type="primary">Bhlhe40</name>
    <name type="synonym">Bhlhb2</name>
    <name type="synonym">Sharp2</name>
</gene>
<reference key="1">
    <citation type="journal article" date="1997" name="Mol. Cell. Neurosci.">
        <title>SHARPs: mammalian enhancer-of-split- and hairy-related proteins coupled to neuronal stimulation.</title>
        <authorList>
            <person name="Rossner M.J."/>
            <person name="Doerr J."/>
            <person name="Gass P."/>
            <person name="Schwab M.H."/>
            <person name="Nave K.-A."/>
        </authorList>
    </citation>
    <scope>NUCLEOTIDE SEQUENCE [MRNA]</scope>
    <source>
        <strain>Sprague-Dawley</strain>
        <tissue>Hippocampus</tissue>
    </source>
</reference>
<reference key="2">
    <citation type="journal article" date="2002" name="Nature">
        <title>Dec1 and Dec2 are regulators of the mammalian molecular clock.</title>
        <authorList>
            <person name="Honma S."/>
            <person name="Kawamoto T."/>
            <person name="Takagi Y."/>
            <person name="Fujimoto K."/>
            <person name="Sato F."/>
            <person name="Noshiro M."/>
            <person name="Kato Y."/>
            <person name="Honma K.I."/>
        </authorList>
    </citation>
    <scope>INDUCTION</scope>
    <scope>TISSUE SPECIFICITY</scope>
</reference>
<reference key="3">
    <citation type="journal article" date="2012" name="Nat. Commun.">
        <title>Quantitative maps of protein phosphorylation sites across 14 different rat organs and tissues.</title>
        <authorList>
            <person name="Lundby A."/>
            <person name="Secher A."/>
            <person name="Lage K."/>
            <person name="Nordsborg N.B."/>
            <person name="Dmytriyev A."/>
            <person name="Lundby C."/>
            <person name="Olsen J.V."/>
        </authorList>
    </citation>
    <scope>PHOSPHORYLATION [LARGE SCALE ANALYSIS] AT SER-383</scope>
    <scope>IDENTIFICATION BY MASS SPECTROMETRY [LARGE SCALE ANALYSIS]</scope>
</reference>
<proteinExistence type="evidence at protein level"/>
<feature type="chain" id="PRO_0000127146" description="Class E basic helix-loop-helix protein 40">
    <location>
        <begin position="1"/>
        <end position="411"/>
    </location>
</feature>
<feature type="domain" description="bHLH" evidence="5">
    <location>
        <begin position="52"/>
        <end position="107"/>
    </location>
</feature>
<feature type="domain" description="Orange" evidence="4">
    <location>
        <begin position="142"/>
        <end position="175"/>
    </location>
</feature>
<feature type="region of interest" description="Essential for interaction with BMAL1, E-box binding and repressor activity against the CLOCK-BMAL1 heterodimer" evidence="1">
    <location>
        <begin position="1"/>
        <end position="139"/>
    </location>
</feature>
<feature type="region of interest" description="Disordered" evidence="6">
    <location>
        <begin position="1"/>
        <end position="21"/>
    </location>
</feature>
<feature type="region of interest" description="Necessary for interaction with RXRA and repressor activity against RXRA" evidence="1">
    <location>
        <begin position="75"/>
        <end position="79"/>
    </location>
</feature>
<feature type="region of interest" description="Disordered" evidence="6">
    <location>
        <begin position="186"/>
        <end position="293"/>
    </location>
</feature>
<feature type="compositionally biased region" description="Basic and acidic residues" evidence="6">
    <location>
        <begin position="248"/>
        <end position="271"/>
    </location>
</feature>
<feature type="modified residue" description="Phosphoserine" evidence="2">
    <location>
        <position position="235"/>
    </location>
</feature>
<feature type="modified residue" description="Phosphoserine" evidence="8">
    <location>
        <position position="383"/>
    </location>
</feature>
<feature type="cross-link" description="Glycyl lysine isopeptide (Lys-Gly) (interchain with G-Cter in SUMO1, SUMO2 and SUMO3)" evidence="1">
    <location>
        <position position="159"/>
    </location>
</feature>
<feature type="cross-link" description="Glycyl lysine isopeptide (Lys-Gly) (interchain with G-Cter in SUMO2)" evidence="2">
    <location>
        <position position="167"/>
    </location>
</feature>
<feature type="cross-link" description="Glycyl lysine isopeptide (Lys-Gly) (interchain with G-Cter in SUMO1); alternate" evidence="2">
    <location>
        <position position="279"/>
    </location>
</feature>
<feature type="cross-link" description="Glycyl lysine isopeptide (Lys-Gly) (interchain with G-Cter in SUMO1, SUMO2 and SUMO3); alternate" evidence="1">
    <location>
        <position position="279"/>
    </location>
</feature>
<feature type="cross-link" description="Glycyl lysine isopeptide (Lys-Gly) (interchain with G-Cter in SUMO2); alternate" evidence="2">
    <location>
        <position position="279"/>
    </location>
</feature>
<feature type="cross-link" description="Glycyl lysine isopeptide (Lys-Gly) (interchain with G-Cter in SUMO2)" evidence="2">
    <location>
        <position position="288"/>
    </location>
</feature>